<sequence length="348" mass="39464">MSEEIIRLVNVTKEYDGVQVLDNINLYILRNEFITLLGPSGCGKTTTLRIIGGFENVTGGDILFEGKKINDVPPYKRKVNTVFQQYALFPHMNVFENIAFGLRIKKVDNKAIYAKVLQVMELMNLKGFEKRNIDSLSGGQRQRVAIARAIVNEPEVLLLDEPLAALDLKLRKEMQLELKRIQQRLGITFIFVTHDQEEALTMSDTVVVMNEGKIQQIGSPIDIYNEPKNVFVADFIGESNILDGVMLQDFLVHFHGRRFDCLDKGFSANEEVDVVIRPEDLKLVAAEEGMLTGEVQSVVFKGVHYEMMIQSSEFCWMVHSTQMEEVGNEVGLRILPNDIHIMKKVKGD</sequence>
<organism>
    <name type="scientific">Desulfitobacterium hafniense (strain Y51)</name>
    <dbReference type="NCBI Taxonomy" id="138119"/>
    <lineage>
        <taxon>Bacteria</taxon>
        <taxon>Bacillati</taxon>
        <taxon>Bacillota</taxon>
        <taxon>Clostridia</taxon>
        <taxon>Eubacteriales</taxon>
        <taxon>Desulfitobacteriaceae</taxon>
        <taxon>Desulfitobacterium</taxon>
    </lineage>
</organism>
<gene>
    <name evidence="1" type="primary">potA</name>
    <name type="ordered locus">DSY1461</name>
</gene>
<accession>Q24XJ2</accession>
<protein>
    <recommendedName>
        <fullName evidence="1">Spermidine/putrescine import ATP-binding protein PotA</fullName>
        <ecNumber evidence="1">7.6.2.11</ecNumber>
    </recommendedName>
</protein>
<reference key="1">
    <citation type="journal article" date="2006" name="J. Bacteriol.">
        <title>Complete genome sequence of the dehalorespiring bacterium Desulfitobacterium hafniense Y51 and comparison with Dehalococcoides ethenogenes 195.</title>
        <authorList>
            <person name="Nonaka H."/>
            <person name="Keresztes G."/>
            <person name="Shinoda Y."/>
            <person name="Ikenaga Y."/>
            <person name="Abe M."/>
            <person name="Naito K."/>
            <person name="Inatomi K."/>
            <person name="Furukawa K."/>
            <person name="Inui M."/>
            <person name="Yukawa H."/>
        </authorList>
    </citation>
    <scope>NUCLEOTIDE SEQUENCE [LARGE SCALE GENOMIC DNA]</scope>
    <source>
        <strain>Y51</strain>
    </source>
</reference>
<keyword id="KW-0067">ATP-binding</keyword>
<keyword id="KW-1003">Cell membrane</keyword>
<keyword id="KW-0472">Membrane</keyword>
<keyword id="KW-0547">Nucleotide-binding</keyword>
<keyword id="KW-1185">Reference proteome</keyword>
<keyword id="KW-1278">Translocase</keyword>
<keyword id="KW-0813">Transport</keyword>
<comment type="function">
    <text evidence="1">Part of the ABC transporter complex PotABCD involved in spermidine/putrescine import. Responsible for energy coupling to the transport system.</text>
</comment>
<comment type="catalytic activity">
    <reaction evidence="1">
        <text>ATP + H2O + polyamine-[polyamine-binding protein]Side 1 = ADP + phosphate + polyamineSide 2 + [polyamine-binding protein]Side 1.</text>
        <dbReference type="EC" id="7.6.2.11"/>
    </reaction>
</comment>
<comment type="subunit">
    <text evidence="1">The complex is composed of two ATP-binding proteins (PotA), two transmembrane proteins (PotB and PotC) and a solute-binding protein (PotD).</text>
</comment>
<comment type="subcellular location">
    <subcellularLocation>
        <location evidence="1">Cell membrane</location>
        <topology evidence="1">Peripheral membrane protein</topology>
    </subcellularLocation>
</comment>
<comment type="similarity">
    <text evidence="1">Belongs to the ABC transporter superfamily. Spermidine/putrescine importer (TC 3.A.1.11.1) family.</text>
</comment>
<comment type="sequence caution" evidence="2">
    <conflict type="erroneous initiation">
        <sequence resource="EMBL-CDS" id="BAE83250"/>
    </conflict>
</comment>
<proteinExistence type="inferred from homology"/>
<name>POTA_DESHY</name>
<dbReference type="EC" id="7.6.2.11" evidence="1"/>
<dbReference type="EMBL" id="AP008230">
    <property type="protein sequence ID" value="BAE83250.1"/>
    <property type="status" value="ALT_INIT"/>
    <property type="molecule type" value="Genomic_DNA"/>
</dbReference>
<dbReference type="RefSeq" id="WP_041272316.1">
    <property type="nucleotide sequence ID" value="NC_007907.1"/>
</dbReference>
<dbReference type="SMR" id="Q24XJ2"/>
<dbReference type="STRING" id="138119.DSY1461"/>
<dbReference type="KEGG" id="dsy:DSY1461"/>
<dbReference type="eggNOG" id="COG3842">
    <property type="taxonomic scope" value="Bacteria"/>
</dbReference>
<dbReference type="HOGENOM" id="CLU_000604_1_1_9"/>
<dbReference type="Proteomes" id="UP000001946">
    <property type="component" value="Chromosome"/>
</dbReference>
<dbReference type="GO" id="GO:0043190">
    <property type="term" value="C:ATP-binding cassette (ABC) transporter complex"/>
    <property type="evidence" value="ECO:0007669"/>
    <property type="project" value="InterPro"/>
</dbReference>
<dbReference type="GO" id="GO:0015594">
    <property type="term" value="F:ABC-type putrescine transporter activity"/>
    <property type="evidence" value="ECO:0007669"/>
    <property type="project" value="InterPro"/>
</dbReference>
<dbReference type="GO" id="GO:0005524">
    <property type="term" value="F:ATP binding"/>
    <property type="evidence" value="ECO:0007669"/>
    <property type="project" value="UniProtKB-KW"/>
</dbReference>
<dbReference type="GO" id="GO:0016887">
    <property type="term" value="F:ATP hydrolysis activity"/>
    <property type="evidence" value="ECO:0007669"/>
    <property type="project" value="InterPro"/>
</dbReference>
<dbReference type="CDD" id="cd03300">
    <property type="entry name" value="ABC_PotA_N"/>
    <property type="match status" value="1"/>
</dbReference>
<dbReference type="FunFam" id="3.40.50.300:FF:000042">
    <property type="entry name" value="Maltose/maltodextrin ABC transporter, ATP-binding protein"/>
    <property type="match status" value="1"/>
</dbReference>
<dbReference type="Gene3D" id="2.40.50.100">
    <property type="match status" value="1"/>
</dbReference>
<dbReference type="Gene3D" id="3.40.50.300">
    <property type="entry name" value="P-loop containing nucleotide triphosphate hydrolases"/>
    <property type="match status" value="1"/>
</dbReference>
<dbReference type="InterPro" id="IPR003593">
    <property type="entry name" value="AAA+_ATPase"/>
</dbReference>
<dbReference type="InterPro" id="IPR050093">
    <property type="entry name" value="ABC_SmlMolc_Importer"/>
</dbReference>
<dbReference type="InterPro" id="IPR003439">
    <property type="entry name" value="ABC_transporter-like_ATP-bd"/>
</dbReference>
<dbReference type="InterPro" id="IPR017871">
    <property type="entry name" value="ABC_transporter-like_CS"/>
</dbReference>
<dbReference type="InterPro" id="IPR008995">
    <property type="entry name" value="Mo/tungstate-bd_C_term_dom"/>
</dbReference>
<dbReference type="InterPro" id="IPR027417">
    <property type="entry name" value="P-loop_NTPase"/>
</dbReference>
<dbReference type="InterPro" id="IPR005893">
    <property type="entry name" value="PotA-like"/>
</dbReference>
<dbReference type="InterPro" id="IPR017879">
    <property type="entry name" value="PotA_ATP-bd"/>
</dbReference>
<dbReference type="InterPro" id="IPR013611">
    <property type="entry name" value="Transp-assoc_OB_typ2"/>
</dbReference>
<dbReference type="NCBIfam" id="NF043075">
    <property type="entry name" value="MMSYN1_0197"/>
    <property type="match status" value="1"/>
</dbReference>
<dbReference type="NCBIfam" id="TIGR01187">
    <property type="entry name" value="potA"/>
    <property type="match status" value="1"/>
</dbReference>
<dbReference type="PANTHER" id="PTHR42781">
    <property type="entry name" value="SPERMIDINE/PUTRESCINE IMPORT ATP-BINDING PROTEIN POTA"/>
    <property type="match status" value="1"/>
</dbReference>
<dbReference type="PANTHER" id="PTHR42781:SF4">
    <property type="entry name" value="SPERMIDINE_PUTRESCINE IMPORT ATP-BINDING PROTEIN POTA"/>
    <property type="match status" value="1"/>
</dbReference>
<dbReference type="Pfam" id="PF00005">
    <property type="entry name" value="ABC_tran"/>
    <property type="match status" value="1"/>
</dbReference>
<dbReference type="Pfam" id="PF08402">
    <property type="entry name" value="TOBE_2"/>
    <property type="match status" value="1"/>
</dbReference>
<dbReference type="SMART" id="SM00382">
    <property type="entry name" value="AAA"/>
    <property type="match status" value="1"/>
</dbReference>
<dbReference type="SUPFAM" id="SSF50331">
    <property type="entry name" value="MOP-like"/>
    <property type="match status" value="1"/>
</dbReference>
<dbReference type="SUPFAM" id="SSF52540">
    <property type="entry name" value="P-loop containing nucleoside triphosphate hydrolases"/>
    <property type="match status" value="1"/>
</dbReference>
<dbReference type="PROSITE" id="PS00211">
    <property type="entry name" value="ABC_TRANSPORTER_1"/>
    <property type="match status" value="1"/>
</dbReference>
<dbReference type="PROSITE" id="PS50893">
    <property type="entry name" value="ABC_TRANSPORTER_2"/>
    <property type="match status" value="1"/>
</dbReference>
<dbReference type="PROSITE" id="PS51305">
    <property type="entry name" value="POTA"/>
    <property type="match status" value="1"/>
</dbReference>
<evidence type="ECO:0000255" key="1">
    <source>
        <dbReference type="HAMAP-Rule" id="MF_01726"/>
    </source>
</evidence>
<evidence type="ECO:0000305" key="2"/>
<feature type="chain" id="PRO_0000286211" description="Spermidine/putrescine import ATP-binding protein PotA">
    <location>
        <begin position="1"/>
        <end position="348"/>
    </location>
</feature>
<feature type="domain" description="ABC transporter" evidence="1">
    <location>
        <begin position="6"/>
        <end position="236"/>
    </location>
</feature>
<feature type="binding site" evidence="1">
    <location>
        <begin position="38"/>
        <end position="45"/>
    </location>
    <ligand>
        <name>ATP</name>
        <dbReference type="ChEBI" id="CHEBI:30616"/>
    </ligand>
</feature>